<sequence>MTIKAISVDIDGTITYPDRRLHEKALEAIRLAESLGVPVMLVTGNTVQFGEAAAILIGTSGPVVGEDGGALSIKEGKLRKRVYLTNMDEEWILWGELKKRYPEALLSFSMPERKAGLVVLRTVPVKAVRELIKELGLNLIAVDSGFAIHIKKPWINKGTGIEKACEYLGISPKEVAHIGDGENDLDAFGVVGYRVAVAQAPESLKEKADYVTTKPYGEGGAEAIEHILRKFGYLPEEKT</sequence>
<proteinExistence type="inferred from homology"/>
<keyword id="KW-0119">Carbohydrate metabolism</keyword>
<keyword id="KW-0378">Hydrolase</keyword>
<keyword id="KW-0460">Magnesium</keyword>
<keyword id="KW-0479">Metal-binding</keyword>
<keyword id="KW-1185">Reference proteome</keyword>
<feature type="chain" id="PRO_0000146726" description="Phosphoglycolate phosphatase">
    <location>
        <begin position="1"/>
        <end position="239"/>
    </location>
</feature>
<feature type="active site" description="Nucleophile" evidence="1">
    <location>
        <position position="9"/>
    </location>
</feature>
<feature type="binding site" evidence="1">
    <location>
        <position position="9"/>
    </location>
    <ligand>
        <name>Mg(2+)</name>
        <dbReference type="ChEBI" id="CHEBI:18420"/>
    </ligand>
</feature>
<feature type="binding site" evidence="1">
    <location>
        <position position="11"/>
    </location>
    <ligand>
        <name>Mg(2+)</name>
        <dbReference type="ChEBI" id="CHEBI:18420"/>
    </ligand>
</feature>
<feature type="binding site" evidence="1">
    <location>
        <position position="157"/>
    </location>
    <ligand>
        <name>substrate</name>
    </ligand>
</feature>
<feature type="binding site" evidence="1">
    <location>
        <position position="180"/>
    </location>
    <ligand>
        <name>Mg(2+)</name>
        <dbReference type="ChEBI" id="CHEBI:18420"/>
    </ligand>
</feature>
<feature type="binding site" evidence="1">
    <location>
        <position position="184"/>
    </location>
    <ligand>
        <name>Mg(2+)</name>
        <dbReference type="ChEBI" id="CHEBI:18420"/>
    </ligand>
</feature>
<reference key="1">
    <citation type="journal article" date="2005" name="Genome Res.">
        <title>Complete genome sequence of the hyperthermophilic archaeon Thermococcus kodakaraensis KOD1 and comparison with Pyrococcus genomes.</title>
        <authorList>
            <person name="Fukui T."/>
            <person name="Atomi H."/>
            <person name="Kanai T."/>
            <person name="Matsumi R."/>
            <person name="Fujiwara S."/>
            <person name="Imanaka T."/>
        </authorList>
    </citation>
    <scope>NUCLEOTIDE SEQUENCE [LARGE SCALE GENOMIC DNA]</scope>
    <source>
        <strain>ATCC BAA-918 / JCM 12380 / KOD1</strain>
    </source>
</reference>
<protein>
    <recommendedName>
        <fullName evidence="1">Phosphoglycolate phosphatase</fullName>
        <shortName evidence="1">PGP</shortName>
        <shortName evidence="1">PGPase</shortName>
        <ecNumber evidence="1">3.1.3.18</ecNumber>
    </recommendedName>
</protein>
<name>PGP_THEKO</name>
<accession>Q5JDB7</accession>
<organism>
    <name type="scientific">Thermococcus kodakarensis (strain ATCC BAA-918 / JCM 12380 / KOD1)</name>
    <name type="common">Pyrococcus kodakaraensis (strain KOD1)</name>
    <dbReference type="NCBI Taxonomy" id="69014"/>
    <lineage>
        <taxon>Archaea</taxon>
        <taxon>Methanobacteriati</taxon>
        <taxon>Methanobacteriota</taxon>
        <taxon>Thermococci</taxon>
        <taxon>Thermococcales</taxon>
        <taxon>Thermococcaceae</taxon>
        <taxon>Thermococcus</taxon>
    </lineage>
</organism>
<dbReference type="EC" id="3.1.3.18" evidence="1"/>
<dbReference type="EMBL" id="AP006878">
    <property type="protein sequence ID" value="BAD86490.1"/>
    <property type="molecule type" value="Genomic_DNA"/>
</dbReference>
<dbReference type="RefSeq" id="WP_011251251.1">
    <property type="nucleotide sequence ID" value="NC_006624.1"/>
</dbReference>
<dbReference type="SMR" id="Q5JDB7"/>
<dbReference type="STRING" id="69014.TK2301"/>
<dbReference type="EnsemblBacteria" id="BAD86490">
    <property type="protein sequence ID" value="BAD86490"/>
    <property type="gene ID" value="TK2301"/>
</dbReference>
<dbReference type="GeneID" id="78448846"/>
<dbReference type="KEGG" id="tko:TK2301"/>
<dbReference type="PATRIC" id="fig|69014.16.peg.2256"/>
<dbReference type="eggNOG" id="arCOG01213">
    <property type="taxonomic scope" value="Archaea"/>
</dbReference>
<dbReference type="HOGENOM" id="CLU_044146_2_0_2"/>
<dbReference type="InParanoid" id="Q5JDB7"/>
<dbReference type="OrthoDB" id="120822at2157"/>
<dbReference type="PhylomeDB" id="Q5JDB7"/>
<dbReference type="Proteomes" id="UP000000536">
    <property type="component" value="Chromosome"/>
</dbReference>
<dbReference type="GO" id="GO:0005829">
    <property type="term" value="C:cytosol"/>
    <property type="evidence" value="ECO:0000318"/>
    <property type="project" value="GO_Central"/>
</dbReference>
<dbReference type="GO" id="GO:0000287">
    <property type="term" value="F:magnesium ion binding"/>
    <property type="evidence" value="ECO:0000318"/>
    <property type="project" value="GO_Central"/>
</dbReference>
<dbReference type="GO" id="GO:0016791">
    <property type="term" value="F:phosphatase activity"/>
    <property type="evidence" value="ECO:0000318"/>
    <property type="project" value="GO_Central"/>
</dbReference>
<dbReference type="GO" id="GO:0008967">
    <property type="term" value="F:phosphoglycolate phosphatase activity"/>
    <property type="evidence" value="ECO:0007669"/>
    <property type="project" value="UniProtKB-UniRule"/>
</dbReference>
<dbReference type="CDD" id="cd07514">
    <property type="entry name" value="HAD_Pase"/>
    <property type="match status" value="1"/>
</dbReference>
<dbReference type="Gene3D" id="3.90.1070.10">
    <property type="match status" value="1"/>
</dbReference>
<dbReference type="Gene3D" id="3.40.50.1000">
    <property type="entry name" value="HAD superfamily/HAD-like"/>
    <property type="match status" value="1"/>
</dbReference>
<dbReference type="HAMAP" id="MF_01419">
    <property type="entry name" value="GPH_hydrolase_arch"/>
    <property type="match status" value="1"/>
</dbReference>
<dbReference type="InterPro" id="IPR036412">
    <property type="entry name" value="HAD-like_sf"/>
</dbReference>
<dbReference type="InterPro" id="IPR023214">
    <property type="entry name" value="HAD_sf"/>
</dbReference>
<dbReference type="InterPro" id="IPR006382">
    <property type="entry name" value="PGPase"/>
</dbReference>
<dbReference type="NCBIfam" id="TIGR01487">
    <property type="entry name" value="Pglycolate_arch"/>
    <property type="match status" value="1"/>
</dbReference>
<dbReference type="NCBIfam" id="NF002245">
    <property type="entry name" value="PRK01158.1"/>
    <property type="match status" value="1"/>
</dbReference>
<dbReference type="NCBIfam" id="TIGR01482">
    <property type="entry name" value="SPP-subfamily"/>
    <property type="match status" value="1"/>
</dbReference>
<dbReference type="PANTHER" id="PTHR10000:SF8">
    <property type="entry name" value="HAD SUPERFAMILY HYDROLASE-LIKE, TYPE 3"/>
    <property type="match status" value="1"/>
</dbReference>
<dbReference type="PANTHER" id="PTHR10000">
    <property type="entry name" value="PHOSPHOSERINE PHOSPHATASE"/>
    <property type="match status" value="1"/>
</dbReference>
<dbReference type="Pfam" id="PF08282">
    <property type="entry name" value="Hydrolase_3"/>
    <property type="match status" value="2"/>
</dbReference>
<dbReference type="SUPFAM" id="SSF56784">
    <property type="entry name" value="HAD-like"/>
    <property type="match status" value="1"/>
</dbReference>
<evidence type="ECO:0000255" key="1">
    <source>
        <dbReference type="HAMAP-Rule" id="MF_01419"/>
    </source>
</evidence>
<comment type="function">
    <text evidence="1">Catalyzes the dephosphorylation of 2-phosphoglycolate.</text>
</comment>
<comment type="catalytic activity">
    <reaction evidence="1">
        <text>2-phosphoglycolate + H2O = glycolate + phosphate</text>
        <dbReference type="Rhea" id="RHEA:14369"/>
        <dbReference type="ChEBI" id="CHEBI:15377"/>
        <dbReference type="ChEBI" id="CHEBI:29805"/>
        <dbReference type="ChEBI" id="CHEBI:43474"/>
        <dbReference type="ChEBI" id="CHEBI:58033"/>
        <dbReference type="EC" id="3.1.3.18"/>
    </reaction>
</comment>
<comment type="cofactor">
    <cofactor evidence="1">
        <name>Mg(2+)</name>
        <dbReference type="ChEBI" id="CHEBI:18420"/>
    </cofactor>
</comment>
<comment type="similarity">
    <text evidence="1">Belongs to the archaeal SPP-like hydrolase family.</text>
</comment>
<gene>
    <name type="ordered locus">TK2301</name>
</gene>